<gene>
    <name evidence="1" type="primary">glmM</name>
    <name type="ordered locus">CPE2329</name>
</gene>
<proteinExistence type="inferred from homology"/>
<sequence length="448" mass="48355">MSRLFGTDGVRGIANTELTAELAYNLGRAGAYVLTEGTHKPKILVAKDTRISGDMLEAALVAGILSVGAEAVCLGVVPTPAVAHLTRVYGADAGVMISASHNPVEYNGIKFFDDKGYKLSDDLEDEIQRVIESGFENVPSPTGANLGREIIEKAALEDYISFAKDTIGISLEGLRVALDCANGASHEAAVRAFRELGAEIFVINDNPDGTNINENCGSTHPEELMEYVVKKKCHMGFAFDGDADRCLAVDEQGNLVDGDFILTICAKYLKELGRLKDDTLVVTVMSNLGLMIACKNEKINTAVTKVGDRYVLEEMLAKGYSLGGEQSGHIIFLDHNSTGDGLVTALQVASIVKRTGKSLFELKNVMKVLPQVLVNAKVPNNMKNIHEEDEEIIAEIKKMEAALDGCGRVLIRPSGTEPLVRVMLEGENQAEIDEMAHNLAKMIEAKCN</sequence>
<feature type="chain" id="PRO_0000147874" description="Phosphoglucosamine mutase">
    <location>
        <begin position="1"/>
        <end position="448"/>
    </location>
</feature>
<feature type="active site" description="Phosphoserine intermediate" evidence="1">
    <location>
        <position position="100"/>
    </location>
</feature>
<feature type="binding site" description="via phosphate group" evidence="1">
    <location>
        <position position="100"/>
    </location>
    <ligand>
        <name>Mg(2+)</name>
        <dbReference type="ChEBI" id="CHEBI:18420"/>
    </ligand>
</feature>
<feature type="binding site" evidence="1">
    <location>
        <position position="240"/>
    </location>
    <ligand>
        <name>Mg(2+)</name>
        <dbReference type="ChEBI" id="CHEBI:18420"/>
    </ligand>
</feature>
<feature type="binding site" evidence="1">
    <location>
        <position position="242"/>
    </location>
    <ligand>
        <name>Mg(2+)</name>
        <dbReference type="ChEBI" id="CHEBI:18420"/>
    </ligand>
</feature>
<feature type="binding site" evidence="1">
    <location>
        <position position="244"/>
    </location>
    <ligand>
        <name>Mg(2+)</name>
        <dbReference type="ChEBI" id="CHEBI:18420"/>
    </ligand>
</feature>
<feature type="modified residue" description="Phosphoserine" evidence="1">
    <location>
        <position position="100"/>
    </location>
</feature>
<reference key="1">
    <citation type="journal article" date="2002" name="Proc. Natl. Acad. Sci. U.S.A.">
        <title>Complete genome sequence of Clostridium perfringens, an anaerobic flesh-eater.</title>
        <authorList>
            <person name="Shimizu T."/>
            <person name="Ohtani K."/>
            <person name="Hirakawa H."/>
            <person name="Ohshima K."/>
            <person name="Yamashita A."/>
            <person name="Shiba T."/>
            <person name="Ogasawara N."/>
            <person name="Hattori M."/>
            <person name="Kuhara S."/>
            <person name="Hayashi H."/>
        </authorList>
    </citation>
    <scope>NUCLEOTIDE SEQUENCE [LARGE SCALE GENOMIC DNA]</scope>
    <source>
        <strain>13 / Type A</strain>
    </source>
</reference>
<dbReference type="EC" id="5.4.2.10" evidence="1"/>
<dbReference type="EMBL" id="BA000016">
    <property type="protein sequence ID" value="BAB82035.1"/>
    <property type="molecule type" value="Genomic_DNA"/>
</dbReference>
<dbReference type="RefSeq" id="WP_003457908.1">
    <property type="nucleotide sequence ID" value="NC_003366.1"/>
</dbReference>
<dbReference type="SMR" id="Q8XHZ5"/>
<dbReference type="STRING" id="195102.gene:10491646"/>
<dbReference type="KEGG" id="cpe:CPE2329"/>
<dbReference type="HOGENOM" id="CLU_016950_7_0_9"/>
<dbReference type="Proteomes" id="UP000000818">
    <property type="component" value="Chromosome"/>
</dbReference>
<dbReference type="GO" id="GO:0005829">
    <property type="term" value="C:cytosol"/>
    <property type="evidence" value="ECO:0007669"/>
    <property type="project" value="TreeGrafter"/>
</dbReference>
<dbReference type="GO" id="GO:0000287">
    <property type="term" value="F:magnesium ion binding"/>
    <property type="evidence" value="ECO:0007669"/>
    <property type="project" value="UniProtKB-UniRule"/>
</dbReference>
<dbReference type="GO" id="GO:0008966">
    <property type="term" value="F:phosphoglucosamine mutase activity"/>
    <property type="evidence" value="ECO:0007669"/>
    <property type="project" value="UniProtKB-UniRule"/>
</dbReference>
<dbReference type="GO" id="GO:0004615">
    <property type="term" value="F:phosphomannomutase activity"/>
    <property type="evidence" value="ECO:0007669"/>
    <property type="project" value="TreeGrafter"/>
</dbReference>
<dbReference type="GO" id="GO:0005975">
    <property type="term" value="P:carbohydrate metabolic process"/>
    <property type="evidence" value="ECO:0007669"/>
    <property type="project" value="InterPro"/>
</dbReference>
<dbReference type="GO" id="GO:0009252">
    <property type="term" value="P:peptidoglycan biosynthetic process"/>
    <property type="evidence" value="ECO:0007669"/>
    <property type="project" value="TreeGrafter"/>
</dbReference>
<dbReference type="GO" id="GO:0006048">
    <property type="term" value="P:UDP-N-acetylglucosamine biosynthetic process"/>
    <property type="evidence" value="ECO:0007669"/>
    <property type="project" value="TreeGrafter"/>
</dbReference>
<dbReference type="CDD" id="cd05802">
    <property type="entry name" value="GlmM"/>
    <property type="match status" value="1"/>
</dbReference>
<dbReference type="FunFam" id="3.30.310.50:FF:000001">
    <property type="entry name" value="Phosphoglucosamine mutase"/>
    <property type="match status" value="1"/>
</dbReference>
<dbReference type="FunFam" id="3.40.120.10:FF:000001">
    <property type="entry name" value="Phosphoglucosamine mutase"/>
    <property type="match status" value="1"/>
</dbReference>
<dbReference type="FunFam" id="3.40.120.10:FF:000002">
    <property type="entry name" value="Phosphoglucosamine mutase"/>
    <property type="match status" value="1"/>
</dbReference>
<dbReference type="Gene3D" id="3.40.120.10">
    <property type="entry name" value="Alpha-D-Glucose-1,6-Bisphosphate, subunit A, domain 3"/>
    <property type="match status" value="3"/>
</dbReference>
<dbReference type="Gene3D" id="3.30.310.50">
    <property type="entry name" value="Alpha-D-phosphohexomutase, C-terminal domain"/>
    <property type="match status" value="1"/>
</dbReference>
<dbReference type="HAMAP" id="MF_01554_B">
    <property type="entry name" value="GlmM_B"/>
    <property type="match status" value="1"/>
</dbReference>
<dbReference type="InterPro" id="IPR005844">
    <property type="entry name" value="A-D-PHexomutase_a/b/a-I"/>
</dbReference>
<dbReference type="InterPro" id="IPR016055">
    <property type="entry name" value="A-D-PHexomutase_a/b/a-I/II/III"/>
</dbReference>
<dbReference type="InterPro" id="IPR005845">
    <property type="entry name" value="A-D-PHexomutase_a/b/a-II"/>
</dbReference>
<dbReference type="InterPro" id="IPR005846">
    <property type="entry name" value="A-D-PHexomutase_a/b/a-III"/>
</dbReference>
<dbReference type="InterPro" id="IPR005843">
    <property type="entry name" value="A-D-PHexomutase_C"/>
</dbReference>
<dbReference type="InterPro" id="IPR036900">
    <property type="entry name" value="A-D-PHexomutase_C_sf"/>
</dbReference>
<dbReference type="InterPro" id="IPR016066">
    <property type="entry name" value="A-D-PHexomutase_CS"/>
</dbReference>
<dbReference type="InterPro" id="IPR005841">
    <property type="entry name" value="Alpha-D-phosphohexomutase_SF"/>
</dbReference>
<dbReference type="InterPro" id="IPR006352">
    <property type="entry name" value="GlmM_bact"/>
</dbReference>
<dbReference type="InterPro" id="IPR050060">
    <property type="entry name" value="Phosphoglucosamine_mutase"/>
</dbReference>
<dbReference type="NCBIfam" id="TIGR01455">
    <property type="entry name" value="glmM"/>
    <property type="match status" value="1"/>
</dbReference>
<dbReference type="NCBIfam" id="NF008139">
    <property type="entry name" value="PRK10887.1"/>
    <property type="match status" value="1"/>
</dbReference>
<dbReference type="PANTHER" id="PTHR42946:SF1">
    <property type="entry name" value="PHOSPHOGLUCOMUTASE (ALPHA-D-GLUCOSE-1,6-BISPHOSPHATE-DEPENDENT)"/>
    <property type="match status" value="1"/>
</dbReference>
<dbReference type="PANTHER" id="PTHR42946">
    <property type="entry name" value="PHOSPHOHEXOSE MUTASE"/>
    <property type="match status" value="1"/>
</dbReference>
<dbReference type="Pfam" id="PF02878">
    <property type="entry name" value="PGM_PMM_I"/>
    <property type="match status" value="1"/>
</dbReference>
<dbReference type="Pfam" id="PF02879">
    <property type="entry name" value="PGM_PMM_II"/>
    <property type="match status" value="1"/>
</dbReference>
<dbReference type="Pfam" id="PF02880">
    <property type="entry name" value="PGM_PMM_III"/>
    <property type="match status" value="1"/>
</dbReference>
<dbReference type="Pfam" id="PF00408">
    <property type="entry name" value="PGM_PMM_IV"/>
    <property type="match status" value="1"/>
</dbReference>
<dbReference type="PRINTS" id="PR00509">
    <property type="entry name" value="PGMPMM"/>
</dbReference>
<dbReference type="SUPFAM" id="SSF55957">
    <property type="entry name" value="Phosphoglucomutase, C-terminal domain"/>
    <property type="match status" value="1"/>
</dbReference>
<dbReference type="SUPFAM" id="SSF53738">
    <property type="entry name" value="Phosphoglucomutase, first 3 domains"/>
    <property type="match status" value="3"/>
</dbReference>
<dbReference type="PROSITE" id="PS00710">
    <property type="entry name" value="PGM_PMM"/>
    <property type="match status" value="1"/>
</dbReference>
<protein>
    <recommendedName>
        <fullName evidence="1">Phosphoglucosamine mutase</fullName>
        <ecNumber evidence="1">5.4.2.10</ecNumber>
    </recommendedName>
</protein>
<organism>
    <name type="scientific">Clostridium perfringens (strain 13 / Type A)</name>
    <dbReference type="NCBI Taxonomy" id="195102"/>
    <lineage>
        <taxon>Bacteria</taxon>
        <taxon>Bacillati</taxon>
        <taxon>Bacillota</taxon>
        <taxon>Clostridia</taxon>
        <taxon>Eubacteriales</taxon>
        <taxon>Clostridiaceae</taxon>
        <taxon>Clostridium</taxon>
    </lineage>
</organism>
<name>GLMM_CLOPE</name>
<evidence type="ECO:0000255" key="1">
    <source>
        <dbReference type="HAMAP-Rule" id="MF_01554"/>
    </source>
</evidence>
<accession>Q8XHZ5</accession>
<comment type="function">
    <text evidence="1">Catalyzes the conversion of glucosamine-6-phosphate to glucosamine-1-phosphate.</text>
</comment>
<comment type="catalytic activity">
    <reaction evidence="1">
        <text>alpha-D-glucosamine 1-phosphate = D-glucosamine 6-phosphate</text>
        <dbReference type="Rhea" id="RHEA:23424"/>
        <dbReference type="ChEBI" id="CHEBI:58516"/>
        <dbReference type="ChEBI" id="CHEBI:58725"/>
        <dbReference type="EC" id="5.4.2.10"/>
    </reaction>
</comment>
<comment type="cofactor">
    <cofactor evidence="1">
        <name>Mg(2+)</name>
        <dbReference type="ChEBI" id="CHEBI:18420"/>
    </cofactor>
    <text evidence="1">Binds 1 Mg(2+) ion per subunit.</text>
</comment>
<comment type="PTM">
    <text evidence="1">Activated by phosphorylation.</text>
</comment>
<comment type="similarity">
    <text evidence="1">Belongs to the phosphohexose mutase family.</text>
</comment>
<keyword id="KW-0413">Isomerase</keyword>
<keyword id="KW-0460">Magnesium</keyword>
<keyword id="KW-0479">Metal-binding</keyword>
<keyword id="KW-0597">Phosphoprotein</keyword>
<keyword id="KW-1185">Reference proteome</keyword>